<name>OMPF_SALTI</name>
<organism>
    <name type="scientific">Salmonella typhi</name>
    <dbReference type="NCBI Taxonomy" id="90370"/>
    <lineage>
        <taxon>Bacteria</taxon>
        <taxon>Pseudomonadati</taxon>
        <taxon>Pseudomonadota</taxon>
        <taxon>Gammaproteobacteria</taxon>
        <taxon>Enterobacterales</taxon>
        <taxon>Enterobacteriaceae</taxon>
        <taxon>Salmonella</taxon>
    </lineage>
</organism>
<keyword id="KW-0998">Cell outer membrane</keyword>
<keyword id="KW-0406">Ion transport</keyword>
<keyword id="KW-0472">Membrane</keyword>
<keyword id="KW-0626">Porin</keyword>
<keyword id="KW-0732">Signal</keyword>
<keyword id="KW-0812">Transmembrane</keyword>
<keyword id="KW-1134">Transmembrane beta strand</keyword>
<keyword id="KW-0813">Transport</keyword>
<dbReference type="EMBL" id="X89757">
    <property type="protein sequence ID" value="CAA61905.1"/>
    <property type="molecule type" value="Genomic_DNA"/>
</dbReference>
<dbReference type="EMBL" id="AL513382">
    <property type="protein sequence ID" value="CAD05399.1"/>
    <property type="molecule type" value="Genomic_DNA"/>
</dbReference>
<dbReference type="EMBL" id="AE014613">
    <property type="protein sequence ID" value="AAO69550.1"/>
    <property type="molecule type" value="Genomic_DNA"/>
</dbReference>
<dbReference type="RefSeq" id="NP_455485.1">
    <property type="nucleotide sequence ID" value="NC_003198.1"/>
</dbReference>
<dbReference type="RefSeq" id="WP_000977709.1">
    <property type="nucleotide sequence ID" value="NZ_WSUR01000013.1"/>
</dbReference>
<dbReference type="SMR" id="Q56113"/>
<dbReference type="STRING" id="220341.gene:17584990"/>
<dbReference type="KEGG" id="stt:t1935"/>
<dbReference type="KEGG" id="sty:STY1002"/>
<dbReference type="PATRIC" id="fig|220341.7.peg.1009"/>
<dbReference type="eggNOG" id="COG3203">
    <property type="taxonomic scope" value="Bacteria"/>
</dbReference>
<dbReference type="HOGENOM" id="CLU_058202_0_0_6"/>
<dbReference type="OMA" id="NMTREAD"/>
<dbReference type="OrthoDB" id="7055111at2"/>
<dbReference type="Proteomes" id="UP000000541">
    <property type="component" value="Chromosome"/>
</dbReference>
<dbReference type="Proteomes" id="UP000002670">
    <property type="component" value="Chromosome"/>
</dbReference>
<dbReference type="GO" id="GO:0009279">
    <property type="term" value="C:cell outer membrane"/>
    <property type="evidence" value="ECO:0007669"/>
    <property type="project" value="UniProtKB-SubCell"/>
</dbReference>
<dbReference type="GO" id="GO:0046930">
    <property type="term" value="C:pore complex"/>
    <property type="evidence" value="ECO:0007669"/>
    <property type="project" value="UniProtKB-KW"/>
</dbReference>
<dbReference type="GO" id="GO:0015288">
    <property type="term" value="F:porin activity"/>
    <property type="evidence" value="ECO:0007669"/>
    <property type="project" value="UniProtKB-KW"/>
</dbReference>
<dbReference type="GO" id="GO:0034220">
    <property type="term" value="P:monoatomic ion transmembrane transport"/>
    <property type="evidence" value="ECO:0007669"/>
    <property type="project" value="InterPro"/>
</dbReference>
<dbReference type="CDD" id="cd00342">
    <property type="entry name" value="gram_neg_porins"/>
    <property type="match status" value="1"/>
</dbReference>
<dbReference type="Gene3D" id="2.40.160.10">
    <property type="entry name" value="Porin"/>
    <property type="match status" value="1"/>
</dbReference>
<dbReference type="InterPro" id="IPR050298">
    <property type="entry name" value="Gram-neg_bact_OMP"/>
</dbReference>
<dbReference type="InterPro" id="IPR033900">
    <property type="entry name" value="Gram_neg_porin_domain"/>
</dbReference>
<dbReference type="InterPro" id="IPR023614">
    <property type="entry name" value="Porin_dom_sf"/>
</dbReference>
<dbReference type="InterPro" id="IPR001897">
    <property type="entry name" value="Porin_gammaproteobac"/>
</dbReference>
<dbReference type="InterPro" id="IPR001702">
    <property type="entry name" value="Porin_Gram-ve"/>
</dbReference>
<dbReference type="InterPro" id="IPR013793">
    <property type="entry name" value="Porin_Gram-ve_CS"/>
</dbReference>
<dbReference type="PANTHER" id="PTHR34501:SF8">
    <property type="entry name" value="OUTER MEMBRANE PORIN N-RELATED"/>
    <property type="match status" value="1"/>
</dbReference>
<dbReference type="PANTHER" id="PTHR34501">
    <property type="entry name" value="PROTEIN YDDL-RELATED"/>
    <property type="match status" value="1"/>
</dbReference>
<dbReference type="Pfam" id="PF00267">
    <property type="entry name" value="Porin_1"/>
    <property type="match status" value="1"/>
</dbReference>
<dbReference type="PRINTS" id="PR00183">
    <property type="entry name" value="ECOLIPORIN"/>
</dbReference>
<dbReference type="PRINTS" id="PR00182">
    <property type="entry name" value="ECOLNEIPORIN"/>
</dbReference>
<dbReference type="SUPFAM" id="SSF56935">
    <property type="entry name" value="Porins"/>
    <property type="match status" value="1"/>
</dbReference>
<dbReference type="PROSITE" id="PS00576">
    <property type="entry name" value="GRAM_NEG_PORIN"/>
    <property type="match status" value="1"/>
</dbReference>
<sequence>MMKRKILAAVIPALLAAATANAAEIYNKDGNKLDLYGKAVGRHVWTTTGDSKNADQTYAQIGFKGETQINTDLTGFGQWEYRTKADRAEGEQQNSNLVRLAFAGLKYAEVGSIDYGRNYGIVYDVESYTDMAPYFSGETWGGAYTDNYMTSRAGGLLTYRNSDFFGLVDGLSFGIQYQGKNQDNHSINSQNGDGVGYTMAYEFDGFGVTAAYSNSKRTNDQQDRDGNGDRAESWAVGAKYDANNVYLAAVYAETRNMSIVENTVTDTVEMANKTQNLEVVAQYQFDFGLRPAISYVQSKGKQLNGADGSADLAKYIQAGATYYFNKNMNVWVDYRFNLLDENDYSSSYVGTDDQAAVGITYQF</sequence>
<reference key="1">
    <citation type="submission" date="1996-07" db="EMBL/GenBank/DDBJ databases">
        <authorList>
            <person name="Fernandez-Mora M."/>
            <person name="Calva E."/>
        </authorList>
    </citation>
    <scope>NUCLEOTIDE SEQUENCE [GENOMIC DNA]</scope>
    <source>
        <strain>IMSS-1</strain>
    </source>
</reference>
<reference key="2">
    <citation type="journal article" date="2001" name="Nature">
        <title>Complete genome sequence of a multiple drug resistant Salmonella enterica serovar Typhi CT18.</title>
        <authorList>
            <person name="Parkhill J."/>
            <person name="Dougan G."/>
            <person name="James K.D."/>
            <person name="Thomson N.R."/>
            <person name="Pickard D."/>
            <person name="Wain J."/>
            <person name="Churcher C.M."/>
            <person name="Mungall K.L."/>
            <person name="Bentley S.D."/>
            <person name="Holden M.T.G."/>
            <person name="Sebaihia M."/>
            <person name="Baker S."/>
            <person name="Basham D."/>
            <person name="Brooks K."/>
            <person name="Chillingworth T."/>
            <person name="Connerton P."/>
            <person name="Cronin A."/>
            <person name="Davis P."/>
            <person name="Davies R.M."/>
            <person name="Dowd L."/>
            <person name="White N."/>
            <person name="Farrar J."/>
            <person name="Feltwell T."/>
            <person name="Hamlin N."/>
            <person name="Haque A."/>
            <person name="Hien T.T."/>
            <person name="Holroyd S."/>
            <person name="Jagels K."/>
            <person name="Krogh A."/>
            <person name="Larsen T.S."/>
            <person name="Leather S."/>
            <person name="Moule S."/>
            <person name="O'Gaora P."/>
            <person name="Parry C."/>
            <person name="Quail M.A."/>
            <person name="Rutherford K.M."/>
            <person name="Simmonds M."/>
            <person name="Skelton J."/>
            <person name="Stevens K."/>
            <person name="Whitehead S."/>
            <person name="Barrell B.G."/>
        </authorList>
    </citation>
    <scope>NUCLEOTIDE SEQUENCE [LARGE SCALE GENOMIC DNA]</scope>
    <source>
        <strain>CT18</strain>
    </source>
</reference>
<reference key="3">
    <citation type="journal article" date="2003" name="J. Bacteriol.">
        <title>Comparative genomics of Salmonella enterica serovar Typhi strains Ty2 and CT18.</title>
        <authorList>
            <person name="Deng W."/>
            <person name="Liou S.-R."/>
            <person name="Plunkett G. III"/>
            <person name="Mayhew G.F."/>
            <person name="Rose D.J."/>
            <person name="Burland V."/>
            <person name="Kodoyianni V."/>
            <person name="Schwartz D.C."/>
            <person name="Blattner F.R."/>
        </authorList>
    </citation>
    <scope>NUCLEOTIDE SEQUENCE [LARGE SCALE GENOMIC DNA]</scope>
    <source>
        <strain>ATCC 700931 / Ty2</strain>
    </source>
</reference>
<reference key="4">
    <citation type="journal article" date="1994" name="Infect. Immun.">
        <title>Characterization of defined ompR mutants of Salmonella typhi: ompR is involved in the regulation of Vi polysaccharide expression.</title>
        <authorList>
            <person name="Pickard D.J."/>
            <person name="Li J."/>
            <person name="Roberts M.R."/>
            <person name="Maskell D."/>
            <person name="Hone D."/>
            <person name="Levine M."/>
            <person name="Dougan G."/>
            <person name="Chatfield S."/>
        </authorList>
    </citation>
    <scope>SUBCELLULAR LOCATION</scope>
    <scope>INDUCTION</scope>
    <source>
        <strain>ATCC 700931 / Ty2 / CVD908</strain>
    </source>
</reference>
<protein>
    <recommendedName>
        <fullName>Outer membrane porin F</fullName>
    </recommendedName>
    <alternativeName>
        <fullName>Outer membrane protein F</fullName>
    </alternativeName>
    <alternativeName>
        <fullName>Outer membrane protein S3</fullName>
    </alternativeName>
    <alternativeName>
        <fullName>Porin OmpF</fullName>
    </alternativeName>
</protein>
<proteinExistence type="evidence at protein level"/>
<gene>
    <name type="primary">ompF</name>
    <name type="synonym">ompS3</name>
    <name type="ordered locus">STY1002</name>
    <name type="ordered locus">t1935</name>
</gene>
<feature type="signal peptide" evidence="1">
    <location>
        <begin position="1"/>
        <end position="22"/>
    </location>
</feature>
<feature type="chain" id="PRO_0000025238" description="Outer membrane porin F">
    <location>
        <begin position="23"/>
        <end position="363"/>
    </location>
</feature>
<feature type="transmembrane region" description="Beta stranded" evidence="1">
    <location>
        <begin position="23"/>
        <end position="28"/>
    </location>
</feature>
<feature type="topological domain" description="Periplasmic" evidence="1">
    <location>
        <position position="29"/>
    </location>
</feature>
<feature type="transmembrane region" description="Beta stranded" evidence="1">
    <location>
        <begin position="30"/>
        <end position="45"/>
    </location>
</feature>
<feature type="topological domain" description="Extracellular" evidence="1">
    <location>
        <begin position="46"/>
        <end position="56"/>
    </location>
</feature>
<feature type="transmembrane region" description="Beta stranded" evidence="1">
    <location>
        <begin position="57"/>
        <end position="69"/>
    </location>
</feature>
<feature type="topological domain" description="Periplasmic" evidence="1">
    <location>
        <begin position="70"/>
        <end position="71"/>
    </location>
</feature>
<feature type="transmembrane region" description="Beta stranded" evidence="1">
    <location>
        <begin position="72"/>
        <end position="84"/>
    </location>
</feature>
<feature type="topological domain" description="Extracellular" evidence="1">
    <location>
        <begin position="85"/>
        <end position="99"/>
    </location>
</feature>
<feature type="transmembrane region" description="Beta stranded" evidence="1">
    <location>
        <begin position="100"/>
        <end position="108"/>
    </location>
</feature>
<feature type="topological domain" description="Periplasmic" evidence="1">
    <location>
        <position position="109"/>
    </location>
</feature>
<feature type="transmembrane region" description="Beta stranded" evidence="1">
    <location>
        <begin position="110"/>
        <end position="117"/>
    </location>
</feature>
<feature type="topological domain" description="Extracellular" evidence="1">
    <location>
        <begin position="118"/>
        <end position="154"/>
    </location>
</feature>
<feature type="transmembrane region" description="Beta stranded" evidence="1">
    <location>
        <begin position="155"/>
        <end position="161"/>
    </location>
</feature>
<feature type="topological domain" description="Periplasmic" evidence="1">
    <location>
        <begin position="162"/>
        <end position="169"/>
    </location>
</feature>
<feature type="transmembrane region" description="Beta stranded" evidence="1">
    <location>
        <begin position="170"/>
        <end position="181"/>
    </location>
</feature>
<feature type="topological domain" description="Extracellular" evidence="1">
    <location>
        <begin position="182"/>
        <end position="192"/>
    </location>
</feature>
<feature type="transmembrane region" description="Beta stranded" evidence="1">
    <location>
        <begin position="193"/>
        <end position="203"/>
    </location>
</feature>
<feature type="topological domain" description="Periplasmic" evidence="1">
    <location>
        <position position="204"/>
    </location>
</feature>
<feature type="transmembrane region" description="Beta stranded" evidence="1">
    <location>
        <begin position="205"/>
        <end position="217"/>
    </location>
</feature>
<feature type="topological domain" description="Extracellular" evidence="1">
    <location>
        <begin position="218"/>
        <end position="230"/>
    </location>
</feature>
<feature type="transmembrane region" description="Beta stranded" evidence="1">
    <location>
        <begin position="231"/>
        <end position="242"/>
    </location>
</feature>
<feature type="topological domain" description="Periplasmic" evidence="1">
    <location>
        <position position="243"/>
    </location>
</feature>
<feature type="transmembrane region" description="Beta stranded" evidence="1">
    <location>
        <begin position="244"/>
        <end position="256"/>
    </location>
</feature>
<feature type="topological domain" description="Extracellular" evidence="1">
    <location>
        <begin position="257"/>
        <end position="272"/>
    </location>
</feature>
<feature type="transmembrane region" description="Beta stranded" evidence="1">
    <location>
        <begin position="273"/>
        <end position="285"/>
    </location>
</feature>
<feature type="topological domain" description="Periplasmic" evidence="1">
    <location>
        <begin position="286"/>
        <end position="287"/>
    </location>
</feature>
<feature type="transmembrane region" description="Beta stranded" evidence="1">
    <location>
        <begin position="288"/>
        <end position="301"/>
    </location>
</feature>
<feature type="topological domain" description="Extracellular" evidence="1">
    <location>
        <begin position="302"/>
        <end position="312"/>
    </location>
</feature>
<feature type="transmembrane region" description="Beta stranded" evidence="1">
    <location>
        <begin position="313"/>
        <end position="324"/>
    </location>
</feature>
<feature type="topological domain" description="Periplasmic" evidence="1">
    <location>
        <begin position="325"/>
        <end position="326"/>
    </location>
</feature>
<feature type="transmembrane region" description="Beta stranded" evidence="1">
    <location>
        <begin position="327"/>
        <end position="336"/>
    </location>
</feature>
<feature type="topological domain" description="Extracellular" evidence="1">
    <location>
        <begin position="337"/>
        <end position="353"/>
    </location>
</feature>
<feature type="transmembrane region" description="Beta stranded" evidence="1">
    <location>
        <begin position="354"/>
        <end position="363"/>
    </location>
</feature>
<feature type="sequence conflict" description="In Ref. 1; CAA61905." evidence="4" ref="1">
    <original>D</original>
    <variation>G</variation>
    <location>
        <position position="307"/>
    </location>
</feature>
<accession>Q56113</accession>
<evidence type="ECO:0000250" key="1"/>
<evidence type="ECO:0000250" key="2">
    <source>
        <dbReference type="UniProtKB" id="P02931"/>
    </source>
</evidence>
<evidence type="ECO:0000269" key="3">
    <source>
    </source>
</evidence>
<evidence type="ECO:0000305" key="4"/>
<comment type="function">
    <text evidence="4">Forms pores that allow passive diffusion of small molecules across the outer membrane.</text>
</comment>
<comment type="subunit">
    <text evidence="2">Homotrimer. Forms mixed heterotrimers with OmpC and with PhoE; other mixed heterotrimers with other porins are also probable.</text>
</comment>
<comment type="subcellular location">
    <subcellularLocation>
        <location evidence="3">Cell outer membrane</location>
        <topology evidence="2">Multi-pass membrane protein</topology>
    </subcellularLocation>
</comment>
<comment type="induction">
    <text evidence="3">Unlike E.coli or S.typhimurium both OmpC and OmpF porins are expressed constitutively, i.e. at both high and low osmolarity, under control of OmpR (at protein level).</text>
</comment>
<comment type="similarity">
    <text evidence="4">Belongs to the Gram-negative porin family.</text>
</comment>